<sequence>MRQIAFYGKGGIGKSTTQQNTMAAMAEMGKKVMIVGCDPKADSTRLILHSKAQTSVIQLAAEKGSVEDLELDEVLVEGQWGIKCVESGGPEPGVGCAGRGVITSISYLEEAGAYEDLDFVTYDVLGDVVCGGFAMPIRQGKAQEIYIVTSGEMMAMYAANNIARGILKYAHSGGVRLGGLICNSRNTDREDELIIELARRLNTQMIHFIPRNNVVQHAELRRMTVIEYDPKNEQADQYRQLAKKIVDNDMKTIPTPITMDELEELLIEFGIMEQEDESIIGKAAAVA</sequence>
<organism>
    <name type="scientific">Frankia casuarinae (strain DSM 45818 / CECT 9043 / HFP020203 / CcI3)</name>
    <dbReference type="NCBI Taxonomy" id="106370"/>
    <lineage>
        <taxon>Bacteria</taxon>
        <taxon>Bacillati</taxon>
        <taxon>Actinomycetota</taxon>
        <taxon>Actinomycetes</taxon>
        <taxon>Frankiales</taxon>
        <taxon>Frankiaceae</taxon>
        <taxon>Frankia</taxon>
    </lineage>
</organism>
<name>NIFH_FRACC</name>
<keyword id="KW-0004">4Fe-4S</keyword>
<keyword id="KW-0013">ADP-ribosylation</keyword>
<keyword id="KW-0067">ATP-binding</keyword>
<keyword id="KW-0408">Iron</keyword>
<keyword id="KW-0411">Iron-sulfur</keyword>
<keyword id="KW-0479">Metal-binding</keyword>
<keyword id="KW-0535">Nitrogen fixation</keyword>
<keyword id="KW-0547">Nucleotide-binding</keyword>
<keyword id="KW-0560">Oxidoreductase</keyword>
<keyword id="KW-1185">Reference proteome</keyword>
<dbReference type="EC" id="1.18.6.1" evidence="1"/>
<dbReference type="EMBL" id="CP000249">
    <property type="protein sequence ID" value="ABD13834.1"/>
    <property type="molecule type" value="Genomic_DNA"/>
</dbReference>
<dbReference type="RefSeq" id="WP_011438842.1">
    <property type="nucleotide sequence ID" value="NZ_JENI01000001.1"/>
</dbReference>
<dbReference type="SMR" id="Q2J4F8"/>
<dbReference type="STRING" id="106370.Francci3_4488"/>
<dbReference type="KEGG" id="fra:Francci3_4488"/>
<dbReference type="eggNOG" id="COG1348">
    <property type="taxonomic scope" value="Bacteria"/>
</dbReference>
<dbReference type="HOGENOM" id="CLU_059373_0_0_11"/>
<dbReference type="OrthoDB" id="9780677at2"/>
<dbReference type="PhylomeDB" id="Q2J4F8"/>
<dbReference type="Proteomes" id="UP000001937">
    <property type="component" value="Chromosome"/>
</dbReference>
<dbReference type="GO" id="GO:0051539">
    <property type="term" value="F:4 iron, 4 sulfur cluster binding"/>
    <property type="evidence" value="ECO:0007669"/>
    <property type="project" value="UniProtKB-KW"/>
</dbReference>
<dbReference type="GO" id="GO:0005524">
    <property type="term" value="F:ATP binding"/>
    <property type="evidence" value="ECO:0007669"/>
    <property type="project" value="UniProtKB-UniRule"/>
</dbReference>
<dbReference type="GO" id="GO:0046872">
    <property type="term" value="F:metal ion binding"/>
    <property type="evidence" value="ECO:0007669"/>
    <property type="project" value="UniProtKB-KW"/>
</dbReference>
<dbReference type="GO" id="GO:0016163">
    <property type="term" value="F:nitrogenase activity"/>
    <property type="evidence" value="ECO:0007669"/>
    <property type="project" value="UniProtKB-UniRule"/>
</dbReference>
<dbReference type="GO" id="GO:0009399">
    <property type="term" value="P:nitrogen fixation"/>
    <property type="evidence" value="ECO:0007669"/>
    <property type="project" value="UniProtKB-UniRule"/>
</dbReference>
<dbReference type="CDD" id="cd02040">
    <property type="entry name" value="NifH"/>
    <property type="match status" value="1"/>
</dbReference>
<dbReference type="FunFam" id="3.40.50.300:FF:001379">
    <property type="entry name" value="Nitrogenase iron protein 1"/>
    <property type="match status" value="1"/>
</dbReference>
<dbReference type="Gene3D" id="3.40.50.300">
    <property type="entry name" value="P-loop containing nucleotide triphosphate hydrolases"/>
    <property type="match status" value="1"/>
</dbReference>
<dbReference type="HAMAP" id="MF_00533">
    <property type="entry name" value="NifH"/>
    <property type="match status" value="1"/>
</dbReference>
<dbReference type="InterPro" id="IPR030655">
    <property type="entry name" value="NifH/chlL_CS"/>
</dbReference>
<dbReference type="InterPro" id="IPR000392">
    <property type="entry name" value="NifH/frxC"/>
</dbReference>
<dbReference type="InterPro" id="IPR005977">
    <property type="entry name" value="Nitrogenase_Fe_NifH"/>
</dbReference>
<dbReference type="InterPro" id="IPR027417">
    <property type="entry name" value="P-loop_NTPase"/>
</dbReference>
<dbReference type="NCBIfam" id="TIGR01287">
    <property type="entry name" value="nifH"/>
    <property type="match status" value="1"/>
</dbReference>
<dbReference type="PANTHER" id="PTHR42864">
    <property type="entry name" value="LIGHT-INDEPENDENT PROTOCHLOROPHYLLIDE REDUCTASE IRON-SULFUR ATP-BINDING PROTEIN"/>
    <property type="match status" value="1"/>
</dbReference>
<dbReference type="PANTHER" id="PTHR42864:SF2">
    <property type="entry name" value="LIGHT-INDEPENDENT PROTOCHLOROPHYLLIDE REDUCTASE IRON-SULFUR ATP-BINDING PROTEIN"/>
    <property type="match status" value="1"/>
</dbReference>
<dbReference type="Pfam" id="PF00142">
    <property type="entry name" value="Fer4_NifH"/>
    <property type="match status" value="1"/>
</dbReference>
<dbReference type="PIRSF" id="PIRSF000363">
    <property type="entry name" value="Nitrogenase_iron"/>
    <property type="match status" value="1"/>
</dbReference>
<dbReference type="PRINTS" id="PR00091">
    <property type="entry name" value="NITROGNASEII"/>
</dbReference>
<dbReference type="SUPFAM" id="SSF52540">
    <property type="entry name" value="P-loop containing nucleoside triphosphate hydrolases"/>
    <property type="match status" value="1"/>
</dbReference>
<dbReference type="PROSITE" id="PS00746">
    <property type="entry name" value="NIFH_FRXC_1"/>
    <property type="match status" value="1"/>
</dbReference>
<dbReference type="PROSITE" id="PS00692">
    <property type="entry name" value="NIFH_FRXC_2"/>
    <property type="match status" value="1"/>
</dbReference>
<dbReference type="PROSITE" id="PS51026">
    <property type="entry name" value="NIFH_FRXC_3"/>
    <property type="match status" value="1"/>
</dbReference>
<accession>Q2J4F8</accession>
<evidence type="ECO:0000255" key="1">
    <source>
        <dbReference type="HAMAP-Rule" id="MF_00533"/>
    </source>
</evidence>
<reference key="1">
    <citation type="journal article" date="2007" name="Genome Res.">
        <title>Genome characteristics of facultatively symbiotic Frankia sp. strains reflect host range and host plant biogeography.</title>
        <authorList>
            <person name="Normand P."/>
            <person name="Lapierre P."/>
            <person name="Tisa L.S."/>
            <person name="Gogarten J.P."/>
            <person name="Alloisio N."/>
            <person name="Bagnarol E."/>
            <person name="Bassi C.A."/>
            <person name="Berry A.M."/>
            <person name="Bickhart D.M."/>
            <person name="Choisne N."/>
            <person name="Couloux A."/>
            <person name="Cournoyer B."/>
            <person name="Cruveiller S."/>
            <person name="Daubin V."/>
            <person name="Demange N."/>
            <person name="Francino M.P."/>
            <person name="Goltsman E."/>
            <person name="Huang Y."/>
            <person name="Kopp O.R."/>
            <person name="Labarre L."/>
            <person name="Lapidus A."/>
            <person name="Lavire C."/>
            <person name="Marechal J."/>
            <person name="Martinez M."/>
            <person name="Mastronunzio J.E."/>
            <person name="Mullin B.C."/>
            <person name="Niemann J."/>
            <person name="Pujic P."/>
            <person name="Rawnsley T."/>
            <person name="Rouy Z."/>
            <person name="Schenowitz C."/>
            <person name="Sellstedt A."/>
            <person name="Tavares F."/>
            <person name="Tomkins J.P."/>
            <person name="Vallenet D."/>
            <person name="Valverde C."/>
            <person name="Wall L.G."/>
            <person name="Wang Y."/>
            <person name="Medigue C."/>
            <person name="Benson D.R."/>
        </authorList>
    </citation>
    <scope>NUCLEOTIDE SEQUENCE [LARGE SCALE GENOMIC DNA]</scope>
    <source>
        <strain>DSM 45818 / CECT 9043 / HFP020203 / CcI3</strain>
    </source>
</reference>
<comment type="function">
    <text evidence="1">The key enzymatic reactions in nitrogen fixation are catalyzed by the nitrogenase complex, which has 2 components: the iron protein and the molybdenum-iron protein.</text>
</comment>
<comment type="catalytic activity">
    <reaction evidence="1">
        <text>N2 + 8 reduced [2Fe-2S]-[ferredoxin] + 16 ATP + 16 H2O = H2 + 8 oxidized [2Fe-2S]-[ferredoxin] + 2 NH4(+) + 16 ADP + 16 phosphate + 6 H(+)</text>
        <dbReference type="Rhea" id="RHEA:21448"/>
        <dbReference type="Rhea" id="RHEA-COMP:10000"/>
        <dbReference type="Rhea" id="RHEA-COMP:10001"/>
        <dbReference type="ChEBI" id="CHEBI:15377"/>
        <dbReference type="ChEBI" id="CHEBI:15378"/>
        <dbReference type="ChEBI" id="CHEBI:17997"/>
        <dbReference type="ChEBI" id="CHEBI:18276"/>
        <dbReference type="ChEBI" id="CHEBI:28938"/>
        <dbReference type="ChEBI" id="CHEBI:30616"/>
        <dbReference type="ChEBI" id="CHEBI:33737"/>
        <dbReference type="ChEBI" id="CHEBI:33738"/>
        <dbReference type="ChEBI" id="CHEBI:43474"/>
        <dbReference type="ChEBI" id="CHEBI:456216"/>
        <dbReference type="EC" id="1.18.6.1"/>
    </reaction>
</comment>
<comment type="cofactor">
    <cofactor evidence="1">
        <name>[4Fe-4S] cluster</name>
        <dbReference type="ChEBI" id="CHEBI:49883"/>
    </cofactor>
    <text evidence="1">Binds 1 [4Fe-4S] cluster per dimer.</text>
</comment>
<comment type="subunit">
    <text evidence="1">Homodimer.</text>
</comment>
<comment type="PTM">
    <text evidence="1">The reversible ADP-ribosylation of Arg-99 inactivates the nitrogenase reductase and regulates nitrogenase activity.</text>
</comment>
<comment type="similarity">
    <text evidence="1">Belongs to the NifH/BchL/ChlL family.</text>
</comment>
<feature type="chain" id="PRO_1000211870" description="Nitrogenase iron protein">
    <location>
        <begin position="1"/>
        <end position="287"/>
    </location>
</feature>
<feature type="binding site" evidence="1">
    <location>
        <begin position="8"/>
        <end position="15"/>
    </location>
    <ligand>
        <name>ATP</name>
        <dbReference type="ChEBI" id="CHEBI:30616"/>
    </ligand>
</feature>
<feature type="binding site" evidence="1">
    <location>
        <position position="96"/>
    </location>
    <ligand>
        <name>[4Fe-4S] cluster</name>
        <dbReference type="ChEBI" id="CHEBI:49883"/>
        <note>ligand shared between dimeric partners</note>
    </ligand>
</feature>
<feature type="binding site" evidence="1">
    <location>
        <position position="130"/>
    </location>
    <ligand>
        <name>[4Fe-4S] cluster</name>
        <dbReference type="ChEBI" id="CHEBI:49883"/>
        <note>ligand shared between dimeric partners</note>
    </ligand>
</feature>
<feature type="modified residue" description="ADP-ribosylarginine; by dinitrogenase reductase ADP-ribosyltransferase" evidence="1">
    <location>
        <position position="99"/>
    </location>
</feature>
<protein>
    <recommendedName>
        <fullName evidence="1">Nitrogenase iron protein</fullName>
        <ecNumber evidence="1">1.18.6.1</ecNumber>
    </recommendedName>
    <alternativeName>
        <fullName evidence="1">Nitrogenase Fe protein</fullName>
    </alternativeName>
    <alternativeName>
        <fullName evidence="1">Nitrogenase component II</fullName>
    </alternativeName>
    <alternativeName>
        <fullName evidence="1">Nitrogenase reductase</fullName>
    </alternativeName>
</protein>
<proteinExistence type="inferred from homology"/>
<gene>
    <name evidence="1" type="primary">nifH</name>
    <name type="ordered locus">Francci3_4488</name>
</gene>